<feature type="initiator methionine" description="Removed" evidence="2 10">
    <location>
        <position position="1"/>
    </location>
</feature>
<feature type="chain" id="PRO_0000128630" description="Large ribosomal subunit protein uL14A">
    <location>
        <begin position="2"/>
        <end position="137"/>
    </location>
</feature>
<feature type="modified residue" description="N-acetylserine" evidence="2 10">
    <location>
        <position position="2"/>
    </location>
</feature>
<feature type="modified residue" description="N6,N6-dimethyllysine; by RKM1" evidence="3">
    <location>
        <position position="106"/>
    </location>
</feature>
<feature type="modified residue" description="N6,N6-dimethyllysine; by RKM1" evidence="3">
    <location>
        <position position="110"/>
    </location>
</feature>
<feature type="strand" evidence="11">
    <location>
        <begin position="22"/>
        <end position="24"/>
    </location>
</feature>
<feature type="strand" evidence="11">
    <location>
        <begin position="33"/>
        <end position="36"/>
    </location>
</feature>
<feature type="strand" evidence="11">
    <location>
        <begin position="63"/>
        <end position="65"/>
    </location>
</feature>
<feature type="turn" evidence="11">
    <location>
        <begin position="67"/>
        <end position="70"/>
    </location>
</feature>
<feature type="strand" evidence="12">
    <location>
        <begin position="74"/>
        <end position="80"/>
    </location>
</feature>
<feature type="strand" evidence="12">
    <location>
        <begin position="85"/>
        <end position="87"/>
    </location>
</feature>
<feature type="turn" evidence="12">
    <location>
        <begin position="88"/>
        <end position="90"/>
    </location>
</feature>
<feature type="strand" evidence="12">
    <location>
        <begin position="91"/>
        <end position="97"/>
    </location>
</feature>
<feature type="strand" evidence="12">
    <location>
        <begin position="99"/>
        <end position="103"/>
    </location>
</feature>
<feature type="strand" evidence="12">
    <location>
        <begin position="109"/>
        <end position="112"/>
    </location>
</feature>
<feature type="strand" evidence="12">
    <location>
        <begin position="114"/>
        <end position="118"/>
    </location>
</feature>
<feature type="helix" evidence="12">
    <location>
        <begin position="122"/>
        <end position="125"/>
    </location>
</feature>
<feature type="helix" evidence="12">
    <location>
        <begin position="127"/>
        <end position="132"/>
    </location>
</feature>
<feature type="strand" evidence="12">
    <location>
        <begin position="133"/>
        <end position="136"/>
    </location>
</feature>
<keyword id="KW-0002">3D-structure</keyword>
<keyword id="KW-0007">Acetylation</keyword>
<keyword id="KW-0963">Cytoplasm</keyword>
<keyword id="KW-0488">Methylation</keyword>
<keyword id="KW-1185">Reference proteome</keyword>
<keyword id="KW-0687">Ribonucleoprotein</keyword>
<keyword id="KW-0689">Ribosomal protein</keyword>
<accession>P0CX41</accession>
<accession>D3DM23</accession>
<accession>P04451</accession>
<evidence type="ECO:0000269" key="1">
    <source>
    </source>
</evidence>
<evidence type="ECO:0000269" key="2">
    <source>
    </source>
</evidence>
<evidence type="ECO:0000269" key="3">
    <source>
    </source>
</evidence>
<evidence type="ECO:0000269" key="4">
    <source>
    </source>
</evidence>
<evidence type="ECO:0000303" key="5">
    <source>
    </source>
</evidence>
<evidence type="ECO:0000303" key="6">
    <source>
    </source>
</evidence>
<evidence type="ECO:0000305" key="7"/>
<evidence type="ECO:0000305" key="8">
    <source>
    </source>
</evidence>
<evidence type="ECO:0000305" key="9">
    <source>
    </source>
</evidence>
<evidence type="ECO:0007744" key="10">
    <source>
    </source>
</evidence>
<evidence type="ECO:0007829" key="11">
    <source>
        <dbReference type="PDB" id="7NAD"/>
    </source>
</evidence>
<evidence type="ECO:0007829" key="12">
    <source>
        <dbReference type="PDB" id="7NAF"/>
    </source>
</evidence>
<protein>
    <recommendedName>
        <fullName evidence="5">Large ribosomal subunit protein uL14A</fullName>
    </recommendedName>
    <alternativeName>
        <fullName evidence="6">60S ribosomal protein L23-A</fullName>
    </alternativeName>
    <alternativeName>
        <fullName>L17a</fullName>
    </alternativeName>
    <alternativeName>
        <fullName>YL32</fullName>
    </alternativeName>
</protein>
<sequence>MSGNGAQGTKFRISLGLPVGAIMNCADNSGARNLYIIAVKGSGSRLNRLPAASLGDMVMATVKKGKPELRKKVMPAIVVRQAKSWRRRDGVFLYFEDNAGVIANPKGEMKGSAITGPVGKECADLWPRVASNSGVVV</sequence>
<name>RL23A_YEAST</name>
<reference key="1">
    <citation type="journal article" date="1984" name="Nucleic Acids Res.">
        <title>Structural comparison of yeast ribosomal protein genes.</title>
        <authorList>
            <person name="Leer R.J."/>
            <person name="van Raamsdonk-Duin M.M.C."/>
            <person name="Hagendoorn M.J.M."/>
            <person name="Mager W.H."/>
            <person name="Planta R.J."/>
        </authorList>
    </citation>
    <scope>NUCLEOTIDE SEQUENCE [GENOMIC DNA]</scope>
</reference>
<reference key="2">
    <citation type="journal article" date="1995" name="Yeast">
        <title>Sequence analysis of a 78.6 kb segment of the left end of Saccharomyces cerevisiae chromosome II.</title>
        <authorList>
            <person name="Obermaier B."/>
            <person name="Gassenhuber J."/>
            <person name="Piravandi E."/>
            <person name="Domdey H."/>
        </authorList>
    </citation>
    <scope>NUCLEOTIDE SEQUENCE [GENOMIC DNA]</scope>
    <source>
        <strain>ATCC 204508 / S288c</strain>
    </source>
</reference>
<reference key="3">
    <citation type="journal article" date="1994" name="EMBO J.">
        <title>Complete DNA sequence of yeast chromosome II.</title>
        <authorList>
            <person name="Feldmann H."/>
            <person name="Aigle M."/>
            <person name="Aljinovic G."/>
            <person name="Andre B."/>
            <person name="Baclet M.C."/>
            <person name="Barthe C."/>
            <person name="Baur A."/>
            <person name="Becam A.-M."/>
            <person name="Biteau N."/>
            <person name="Boles E."/>
            <person name="Brandt T."/>
            <person name="Brendel M."/>
            <person name="Brueckner M."/>
            <person name="Bussereau F."/>
            <person name="Christiansen C."/>
            <person name="Contreras R."/>
            <person name="Crouzet M."/>
            <person name="Cziepluch C."/>
            <person name="Demolis N."/>
            <person name="Delaveau T."/>
            <person name="Doignon F."/>
            <person name="Domdey H."/>
            <person name="Duesterhus S."/>
            <person name="Dubois E."/>
            <person name="Dujon B."/>
            <person name="El Bakkoury M."/>
            <person name="Entian K.-D."/>
            <person name="Feuermann M."/>
            <person name="Fiers W."/>
            <person name="Fobo G.M."/>
            <person name="Fritz C."/>
            <person name="Gassenhuber J."/>
            <person name="Glansdorff N."/>
            <person name="Goffeau A."/>
            <person name="Grivell L.A."/>
            <person name="de Haan M."/>
            <person name="Hein C."/>
            <person name="Herbert C.J."/>
            <person name="Hollenberg C.P."/>
            <person name="Holmstroem K."/>
            <person name="Jacq C."/>
            <person name="Jacquet M."/>
            <person name="Jauniaux J.-C."/>
            <person name="Jonniaux J.-L."/>
            <person name="Kallesoee T."/>
            <person name="Kiesau P."/>
            <person name="Kirchrath L."/>
            <person name="Koetter P."/>
            <person name="Korol S."/>
            <person name="Liebl S."/>
            <person name="Logghe M."/>
            <person name="Lohan A.J.E."/>
            <person name="Louis E.J."/>
            <person name="Li Z.Y."/>
            <person name="Maat M.J."/>
            <person name="Mallet L."/>
            <person name="Mannhaupt G."/>
            <person name="Messenguy F."/>
            <person name="Miosga T."/>
            <person name="Molemans F."/>
            <person name="Mueller S."/>
            <person name="Nasr F."/>
            <person name="Obermaier B."/>
            <person name="Perea J."/>
            <person name="Pierard A."/>
            <person name="Piravandi E."/>
            <person name="Pohl F.M."/>
            <person name="Pohl T.M."/>
            <person name="Potier S."/>
            <person name="Proft M."/>
            <person name="Purnelle B."/>
            <person name="Ramezani Rad M."/>
            <person name="Rieger M."/>
            <person name="Rose M."/>
            <person name="Schaaff-Gerstenschlaeger I."/>
            <person name="Scherens B."/>
            <person name="Schwarzlose C."/>
            <person name="Skala J."/>
            <person name="Slonimski P.P."/>
            <person name="Smits P.H.M."/>
            <person name="Souciet J.-L."/>
            <person name="Steensma H.Y."/>
            <person name="Stucka R."/>
            <person name="Urrestarazu L.A."/>
            <person name="van der Aart Q.J.M."/>
            <person name="Van Dyck L."/>
            <person name="Vassarotti A."/>
            <person name="Vetter I."/>
            <person name="Vierendeels F."/>
            <person name="Vissers S."/>
            <person name="Wagner G."/>
            <person name="de Wergifosse P."/>
            <person name="Wolfe K.H."/>
            <person name="Zagulski M."/>
            <person name="Zimmermann F.K."/>
            <person name="Mewes H.-W."/>
            <person name="Kleine K."/>
        </authorList>
    </citation>
    <scope>NUCLEOTIDE SEQUENCE [LARGE SCALE GENOMIC DNA]</scope>
    <source>
        <strain>ATCC 204508 / S288c</strain>
    </source>
</reference>
<reference key="4">
    <citation type="journal article" date="2014" name="G3 (Bethesda)">
        <title>The reference genome sequence of Saccharomyces cerevisiae: Then and now.</title>
        <authorList>
            <person name="Engel S.R."/>
            <person name="Dietrich F.S."/>
            <person name="Fisk D.G."/>
            <person name="Binkley G."/>
            <person name="Balakrishnan R."/>
            <person name="Costanzo M.C."/>
            <person name="Dwight S.S."/>
            <person name="Hitz B.C."/>
            <person name="Karra K."/>
            <person name="Nash R.S."/>
            <person name="Weng S."/>
            <person name="Wong E.D."/>
            <person name="Lloyd P."/>
            <person name="Skrzypek M.S."/>
            <person name="Miyasato S.R."/>
            <person name="Simison M."/>
            <person name="Cherry J.M."/>
        </authorList>
    </citation>
    <scope>GENOME REANNOTATION</scope>
    <source>
        <strain>ATCC 204508 / S288c</strain>
    </source>
</reference>
<reference key="5">
    <citation type="journal article" date="1998" name="Yeast">
        <title>The list of cytoplasmic ribosomal proteins of Saccharomyces cerevisiae.</title>
        <authorList>
            <person name="Planta R.J."/>
            <person name="Mager W.H."/>
        </authorList>
    </citation>
    <scope>NOMENCLATURE</scope>
    <scope>SUBUNIT</scope>
</reference>
<reference key="6">
    <citation type="journal article" date="2002" name="Proc. Natl. Acad. Sci. U.S.A.">
        <title>Direct mass spectrometric analysis of intact proteins of the yeast large ribosomal subunit using capillary LC/FTICR.</title>
        <authorList>
            <person name="Lee S.-W."/>
            <person name="Berger S.J."/>
            <person name="Martinovic S."/>
            <person name="Pasa-Tolic L."/>
            <person name="Anderson G.A."/>
            <person name="Shen Y."/>
            <person name="Zhao R."/>
            <person name="Smith R.D."/>
        </authorList>
    </citation>
    <scope>MASS SPECTROMETRY</scope>
</reference>
<reference key="7">
    <citation type="journal article" date="2005" name="J. Biol. Chem.">
        <title>A novel SET domain methyltransferase modifies ribosomal protein Rpl23ab in yeast.</title>
        <authorList>
            <person name="Porras-Yakushi T.R."/>
            <person name="Whitelegge J.P."/>
            <person name="Miranda T.B."/>
            <person name="Clarke S."/>
        </authorList>
    </citation>
    <scope>ACETYLATION AT SER-2</scope>
    <scope>METHYLATION</scope>
</reference>
<reference key="8">
    <citation type="journal article" date="2007" name="J. Biol. Chem.">
        <title>Yeast ribosomal/cytochrome c SET domain methyltransferase subfamily: identification of Rpl23ab methylation sites and recognition motifs.</title>
        <authorList>
            <person name="Porras-Yakushi T.R."/>
            <person name="Whitelegge J.P."/>
            <person name="Clarke S."/>
        </authorList>
    </citation>
    <scope>METHYLATION AT LYS-106 AND LYS-110</scope>
</reference>
<reference key="9">
    <citation type="journal article" date="2012" name="Proc. Natl. Acad. Sci. U.S.A.">
        <title>N-terminal acetylome analyses and functional insights of the N-terminal acetyltransferase NatB.</title>
        <authorList>
            <person name="Van Damme P."/>
            <person name="Lasa M."/>
            <person name="Polevoda B."/>
            <person name="Gazquez C."/>
            <person name="Elosegui-Artola A."/>
            <person name="Kim D.S."/>
            <person name="De Juan-Pardo E."/>
            <person name="Demeyer K."/>
            <person name="Hole K."/>
            <person name="Larrea E."/>
            <person name="Timmerman E."/>
            <person name="Prieto J."/>
            <person name="Arnesen T."/>
            <person name="Sherman F."/>
            <person name="Gevaert K."/>
            <person name="Aldabe R."/>
        </authorList>
    </citation>
    <scope>ACETYLATION [LARGE SCALE ANALYSIS] AT SER-2</scope>
    <scope>CLEAVAGE OF INITIATOR METHIONINE [LARGE SCALE ANALYSIS]</scope>
    <scope>IDENTIFICATION BY MASS SPECTROMETRY [LARGE SCALE ANALYSIS]</scope>
</reference>
<reference key="10">
    <citation type="journal article" date="2014" name="Curr. Opin. Struct. Biol.">
        <title>A new system for naming ribosomal proteins.</title>
        <authorList>
            <person name="Ban N."/>
            <person name="Beckmann R."/>
            <person name="Cate J.H.D."/>
            <person name="Dinman J.D."/>
            <person name="Dragon F."/>
            <person name="Ellis S.R."/>
            <person name="Lafontaine D.L.J."/>
            <person name="Lindahl L."/>
            <person name="Liljas A."/>
            <person name="Lipton J.M."/>
            <person name="McAlear M.A."/>
            <person name="Moore P.B."/>
            <person name="Noller H.F."/>
            <person name="Ortega J."/>
            <person name="Panse V.G."/>
            <person name="Ramakrishnan V."/>
            <person name="Spahn C.M.T."/>
            <person name="Steitz T.A."/>
            <person name="Tchorzewski M."/>
            <person name="Tollervey D."/>
            <person name="Warren A.J."/>
            <person name="Williamson J.R."/>
            <person name="Wilson D."/>
            <person name="Yonath A."/>
            <person name="Yusupov M."/>
        </authorList>
    </citation>
    <scope>NOMENCLATURE</scope>
</reference>
<reference key="11">
    <citation type="journal article" date="2001" name="Cell">
        <title>Structure of the 80S ribosome from Saccharomyces cerevisiae -- tRNA-ribosome and subunit-subunit interactions.</title>
        <authorList>
            <person name="Spahn C.M.T."/>
            <person name="Beckmann R."/>
            <person name="Eswar N."/>
            <person name="Penczek P.A."/>
            <person name="Sali A."/>
            <person name="Blobel G."/>
            <person name="Frank J."/>
        </authorList>
    </citation>
    <scope>3D-STRUCTURE MODELING OF 7-137</scope>
    <scope>ELECTRON MICROSCOPY</scope>
</reference>
<reference key="12">
    <citation type="journal article" date="2004" name="EMBO J.">
        <title>Domain movements of elongation factor eEF2 and the eukaryotic 80S ribosome facilitate tRNA translocation.</title>
        <authorList>
            <person name="Spahn C.M.T."/>
            <person name="Gomez-Lorenzo M.G."/>
            <person name="Grassucci R.A."/>
            <person name="Joergensen R."/>
            <person name="Andersen G.R."/>
            <person name="Beckmann R."/>
            <person name="Penczek P.A."/>
            <person name="Ballesta J.P.G."/>
            <person name="Frank J."/>
        </authorList>
    </citation>
    <scope>3D-STRUCTURE MODELING</scope>
    <scope>ELECTRON MICROSCOPY</scope>
</reference>
<reference key="13">
    <citation type="journal article" date="2010" name="Science">
        <title>Crystal structure of the eukaryotic ribosome.</title>
        <authorList>
            <person name="Ben-Shem A."/>
            <person name="Jenner L."/>
            <person name="Yusupova G."/>
            <person name="Yusupov M."/>
        </authorList>
    </citation>
    <scope>X-RAY CRYSTALLOGRAPHY (4.0 ANGSTROMS) OF 80S RIBOSOME</scope>
</reference>
<reference key="14">
    <citation type="journal article" date="2011" name="Science">
        <title>The structure of the eukaryotic ribosome at 3.0 A resolution.</title>
        <authorList>
            <person name="Ben-Shem A."/>
            <person name="Garreau de Loubresse N."/>
            <person name="Melnikov S."/>
            <person name="Jenner L."/>
            <person name="Yusupova G."/>
            <person name="Yusupov M."/>
        </authorList>
    </citation>
    <scope>X-RAY CRYSTALLOGRAPHY (3.0 ANGSTROMS) OF 80S RIBOSOME</scope>
    <scope>SUBUNIT</scope>
    <scope>SUBCELLULAR LOCATION</scope>
</reference>
<proteinExistence type="evidence at protein level"/>
<organism>
    <name type="scientific">Saccharomyces cerevisiae (strain ATCC 204508 / S288c)</name>
    <name type="common">Baker's yeast</name>
    <dbReference type="NCBI Taxonomy" id="559292"/>
    <lineage>
        <taxon>Eukaryota</taxon>
        <taxon>Fungi</taxon>
        <taxon>Dikarya</taxon>
        <taxon>Ascomycota</taxon>
        <taxon>Saccharomycotina</taxon>
        <taxon>Saccharomycetes</taxon>
        <taxon>Saccharomycetales</taxon>
        <taxon>Saccharomycetaceae</taxon>
        <taxon>Saccharomyces</taxon>
    </lineage>
</organism>
<dbReference type="EMBL" id="X01694">
    <property type="protein sequence ID" value="CAA25841.1"/>
    <property type="molecule type" value="Genomic_DNA"/>
</dbReference>
<dbReference type="EMBL" id="X79489">
    <property type="protein sequence ID" value="CAA56018.1"/>
    <property type="molecule type" value="Genomic_DNA"/>
</dbReference>
<dbReference type="EMBL" id="Z35848">
    <property type="protein sequence ID" value="CAA84908.1"/>
    <property type="molecule type" value="Genomic_DNA"/>
</dbReference>
<dbReference type="EMBL" id="BK006936">
    <property type="protein sequence ID" value="DAA07037.1"/>
    <property type="molecule type" value="Genomic_DNA"/>
</dbReference>
<dbReference type="PIR" id="A02792">
    <property type="entry name" value="R5BY17"/>
</dbReference>
<dbReference type="RefSeq" id="NP_009466.1">
    <property type="nucleotide sequence ID" value="NM_001178327.1"/>
</dbReference>
<dbReference type="PDB" id="2X7N">
    <property type="method" value="EM"/>
    <property type="resolution" value="11.80 A"/>
    <property type="chains" value="C=6-137"/>
</dbReference>
<dbReference type="PDB" id="3J16">
    <property type="method" value="EM"/>
    <property type="chains" value="I=1-137"/>
</dbReference>
<dbReference type="PDB" id="3J6X">
    <property type="method" value="EM"/>
    <property type="resolution" value="6.10 A"/>
    <property type="chains" value="63=1-137"/>
</dbReference>
<dbReference type="PDB" id="3J6Y">
    <property type="method" value="EM"/>
    <property type="resolution" value="6.10 A"/>
    <property type="chains" value="63=1-137"/>
</dbReference>
<dbReference type="PDB" id="3J77">
    <property type="method" value="EM"/>
    <property type="resolution" value="6.20 A"/>
    <property type="chains" value="73=1-137"/>
</dbReference>
<dbReference type="PDB" id="3J78">
    <property type="method" value="EM"/>
    <property type="resolution" value="6.30 A"/>
    <property type="chains" value="73=1-137"/>
</dbReference>
<dbReference type="PDB" id="3JCT">
    <property type="method" value="EM"/>
    <property type="resolution" value="3.08 A"/>
    <property type="chains" value="V=1-137"/>
</dbReference>
<dbReference type="PDB" id="4U3M">
    <property type="method" value="X-ray"/>
    <property type="resolution" value="3.00 A"/>
    <property type="chains" value="N3/n3=2-137"/>
</dbReference>
<dbReference type="PDB" id="4U3N">
    <property type="method" value="X-ray"/>
    <property type="resolution" value="3.20 A"/>
    <property type="chains" value="N3/n3=2-137"/>
</dbReference>
<dbReference type="PDB" id="4U3U">
    <property type="method" value="X-ray"/>
    <property type="resolution" value="2.90 A"/>
    <property type="chains" value="N3/n3=2-137"/>
</dbReference>
<dbReference type="PDB" id="4U4N">
    <property type="method" value="X-ray"/>
    <property type="resolution" value="3.10 A"/>
    <property type="chains" value="N3/n3=2-137"/>
</dbReference>
<dbReference type="PDB" id="4U4O">
    <property type="method" value="X-ray"/>
    <property type="resolution" value="3.60 A"/>
    <property type="chains" value="N3/n3=2-137"/>
</dbReference>
<dbReference type="PDB" id="4U4Q">
    <property type="method" value="X-ray"/>
    <property type="resolution" value="3.00 A"/>
    <property type="chains" value="N3/n3=2-137"/>
</dbReference>
<dbReference type="PDB" id="4U4R">
    <property type="method" value="X-ray"/>
    <property type="resolution" value="2.80 A"/>
    <property type="chains" value="N3/n3=2-137"/>
</dbReference>
<dbReference type="PDB" id="4U4U">
    <property type="method" value="X-ray"/>
    <property type="resolution" value="3.00 A"/>
    <property type="chains" value="N3/n3=2-137"/>
</dbReference>
<dbReference type="PDB" id="4U4Y">
    <property type="method" value="X-ray"/>
    <property type="resolution" value="3.20 A"/>
    <property type="chains" value="N3/n3=2-137"/>
</dbReference>
<dbReference type="PDB" id="4U4Z">
    <property type="method" value="X-ray"/>
    <property type="resolution" value="3.10 A"/>
    <property type="chains" value="N3/n3=2-137"/>
</dbReference>
<dbReference type="PDB" id="4U50">
    <property type="method" value="X-ray"/>
    <property type="resolution" value="3.20 A"/>
    <property type="chains" value="N3/n3=2-137"/>
</dbReference>
<dbReference type="PDB" id="4U51">
    <property type="method" value="X-ray"/>
    <property type="resolution" value="3.20 A"/>
    <property type="chains" value="N3/n3=2-137"/>
</dbReference>
<dbReference type="PDB" id="4U52">
    <property type="method" value="X-ray"/>
    <property type="resolution" value="3.00 A"/>
    <property type="chains" value="N3/n3=2-137"/>
</dbReference>
<dbReference type="PDB" id="4U53">
    <property type="method" value="X-ray"/>
    <property type="resolution" value="3.30 A"/>
    <property type="chains" value="N3/n3=2-137"/>
</dbReference>
<dbReference type="PDB" id="4U55">
    <property type="method" value="X-ray"/>
    <property type="resolution" value="3.20 A"/>
    <property type="chains" value="N3/n3=2-137"/>
</dbReference>
<dbReference type="PDB" id="4U56">
    <property type="method" value="X-ray"/>
    <property type="resolution" value="3.45 A"/>
    <property type="chains" value="N3/n3=2-137"/>
</dbReference>
<dbReference type="PDB" id="4U6F">
    <property type="method" value="X-ray"/>
    <property type="resolution" value="3.10 A"/>
    <property type="chains" value="N3/n3=2-137"/>
</dbReference>
<dbReference type="PDB" id="4V4B">
    <property type="method" value="EM"/>
    <property type="resolution" value="11.70 A"/>
    <property type="chains" value="BR=1-137"/>
</dbReference>
<dbReference type="PDB" id="4V5Z">
    <property type="method" value="EM"/>
    <property type="resolution" value="8.70 A"/>
    <property type="chains" value="Bk=4-136"/>
</dbReference>
<dbReference type="PDB" id="4V6I">
    <property type="method" value="EM"/>
    <property type="resolution" value="8.80 A"/>
    <property type="chains" value="BM=1-137"/>
</dbReference>
<dbReference type="PDB" id="4V7F">
    <property type="method" value="EM"/>
    <property type="resolution" value="8.70 A"/>
    <property type="chains" value="L=1-137"/>
</dbReference>
<dbReference type="PDB" id="4V7R">
    <property type="method" value="X-ray"/>
    <property type="resolution" value="4.00 A"/>
    <property type="chains" value="BU/DU=1-137"/>
</dbReference>
<dbReference type="PDB" id="4V88">
    <property type="method" value="X-ray"/>
    <property type="resolution" value="3.00 A"/>
    <property type="chains" value="BV/DV=1-137"/>
</dbReference>
<dbReference type="PDB" id="4V8T">
    <property type="method" value="EM"/>
    <property type="resolution" value="8.10 A"/>
    <property type="chains" value="V=1-137"/>
</dbReference>
<dbReference type="PDB" id="4V8Y">
    <property type="method" value="EM"/>
    <property type="resolution" value="4.30 A"/>
    <property type="chains" value="BV=2-137"/>
</dbReference>
<dbReference type="PDB" id="4V8Z">
    <property type="method" value="EM"/>
    <property type="resolution" value="6.60 A"/>
    <property type="chains" value="BV=2-137"/>
</dbReference>
<dbReference type="PDB" id="4V91">
    <property type="method" value="EM"/>
    <property type="resolution" value="3.70 A"/>
    <property type="chains" value="V=1-137"/>
</dbReference>
<dbReference type="PDB" id="5APN">
    <property type="method" value="EM"/>
    <property type="resolution" value="3.91 A"/>
    <property type="chains" value="V=1-137"/>
</dbReference>
<dbReference type="PDB" id="5APO">
    <property type="method" value="EM"/>
    <property type="resolution" value="3.41 A"/>
    <property type="chains" value="V=1-137"/>
</dbReference>
<dbReference type="PDB" id="5DAT">
    <property type="method" value="X-ray"/>
    <property type="resolution" value="3.15 A"/>
    <property type="chains" value="N3/n3=2-137"/>
</dbReference>
<dbReference type="PDB" id="5DC3">
    <property type="method" value="X-ray"/>
    <property type="resolution" value="3.25 A"/>
    <property type="chains" value="N3/n3=2-137"/>
</dbReference>
<dbReference type="PDB" id="5DGE">
    <property type="method" value="X-ray"/>
    <property type="resolution" value="3.45 A"/>
    <property type="chains" value="N3/n3=2-137"/>
</dbReference>
<dbReference type="PDB" id="5DGF">
    <property type="method" value="X-ray"/>
    <property type="resolution" value="3.30 A"/>
    <property type="chains" value="N3/n3=2-137"/>
</dbReference>
<dbReference type="PDB" id="5DGV">
    <property type="method" value="X-ray"/>
    <property type="resolution" value="3.10 A"/>
    <property type="chains" value="N3/n3=2-137"/>
</dbReference>
<dbReference type="PDB" id="5FCI">
    <property type="method" value="X-ray"/>
    <property type="resolution" value="3.40 A"/>
    <property type="chains" value="N3/n3=2-137"/>
</dbReference>
<dbReference type="PDB" id="5FCJ">
    <property type="method" value="X-ray"/>
    <property type="resolution" value="3.10 A"/>
    <property type="chains" value="N3/n3=2-137"/>
</dbReference>
<dbReference type="PDB" id="5GAK">
    <property type="method" value="EM"/>
    <property type="resolution" value="3.88 A"/>
    <property type="chains" value="X=1-137"/>
</dbReference>
<dbReference type="PDB" id="5H4P">
    <property type="method" value="EM"/>
    <property type="resolution" value="3.07 A"/>
    <property type="chains" value="V=1-137"/>
</dbReference>
<dbReference type="PDB" id="5I4L">
    <property type="method" value="X-ray"/>
    <property type="resolution" value="3.10 A"/>
    <property type="chains" value="N3/n3=2-137"/>
</dbReference>
<dbReference type="PDB" id="5JCS">
    <property type="method" value="EM"/>
    <property type="resolution" value="9.50 A"/>
    <property type="chains" value="V=1-137"/>
</dbReference>
<dbReference type="PDB" id="5JUO">
    <property type="method" value="EM"/>
    <property type="resolution" value="4.00 A"/>
    <property type="chains" value="AA=1-137"/>
</dbReference>
<dbReference type="PDB" id="5JUP">
    <property type="method" value="EM"/>
    <property type="resolution" value="3.50 A"/>
    <property type="chains" value="AA=1-137"/>
</dbReference>
<dbReference type="PDB" id="5JUS">
    <property type="method" value="EM"/>
    <property type="resolution" value="4.20 A"/>
    <property type="chains" value="AA=1-137"/>
</dbReference>
<dbReference type="PDB" id="5JUT">
    <property type="method" value="EM"/>
    <property type="resolution" value="4.00 A"/>
    <property type="chains" value="AA=1-137"/>
</dbReference>
<dbReference type="PDB" id="5JUU">
    <property type="method" value="EM"/>
    <property type="resolution" value="4.00 A"/>
    <property type="chains" value="AA=1-137"/>
</dbReference>
<dbReference type="PDB" id="5LYB">
    <property type="method" value="X-ray"/>
    <property type="resolution" value="3.25 A"/>
    <property type="chains" value="N3/n3=2-137"/>
</dbReference>
<dbReference type="PDB" id="5M1J">
    <property type="method" value="EM"/>
    <property type="resolution" value="3.30 A"/>
    <property type="chains" value="V5=2-137"/>
</dbReference>
<dbReference type="PDB" id="5MC6">
    <property type="method" value="EM"/>
    <property type="resolution" value="3.80 A"/>
    <property type="chains" value="AB=1-137"/>
</dbReference>
<dbReference type="PDB" id="5MEI">
    <property type="method" value="X-ray"/>
    <property type="resolution" value="3.50 A"/>
    <property type="chains" value="CX/l2=2-137"/>
</dbReference>
<dbReference type="PDB" id="5NDG">
    <property type="method" value="X-ray"/>
    <property type="resolution" value="3.70 A"/>
    <property type="chains" value="N3/n3=3-137"/>
</dbReference>
<dbReference type="PDB" id="5NDV">
    <property type="method" value="X-ray"/>
    <property type="resolution" value="3.30 A"/>
    <property type="chains" value="N3/n3=2-137"/>
</dbReference>
<dbReference type="PDB" id="5NDW">
    <property type="method" value="X-ray"/>
    <property type="resolution" value="3.70 A"/>
    <property type="chains" value="N3/n3=2-137"/>
</dbReference>
<dbReference type="PDB" id="5OBM">
    <property type="method" value="X-ray"/>
    <property type="resolution" value="3.40 A"/>
    <property type="chains" value="N3/n3=2-137"/>
</dbReference>
<dbReference type="PDB" id="5ON6">
    <property type="method" value="X-ray"/>
    <property type="resolution" value="3.10 A"/>
    <property type="chains" value="CX/lR=2-137"/>
</dbReference>
<dbReference type="PDB" id="5T62">
    <property type="method" value="EM"/>
    <property type="resolution" value="3.30 A"/>
    <property type="chains" value="i=1-137"/>
</dbReference>
<dbReference type="PDB" id="5T6R">
    <property type="method" value="EM"/>
    <property type="resolution" value="4.50 A"/>
    <property type="chains" value="i=1-137"/>
</dbReference>
<dbReference type="PDB" id="5TBW">
    <property type="method" value="X-ray"/>
    <property type="resolution" value="3.00 A"/>
    <property type="chains" value="6/CX=2-137"/>
</dbReference>
<dbReference type="PDB" id="5TGA">
    <property type="method" value="X-ray"/>
    <property type="resolution" value="3.30 A"/>
    <property type="chains" value="N3/n3=2-137"/>
</dbReference>
<dbReference type="PDB" id="5TGM">
    <property type="method" value="X-ray"/>
    <property type="resolution" value="3.50 A"/>
    <property type="chains" value="N3/n3=2-137"/>
</dbReference>
<dbReference type="PDB" id="6C0F">
    <property type="method" value="EM"/>
    <property type="resolution" value="3.70 A"/>
    <property type="chains" value="V=1-137"/>
</dbReference>
<dbReference type="PDB" id="6ELZ">
    <property type="method" value="EM"/>
    <property type="resolution" value="3.30 A"/>
    <property type="chains" value="V=1-137"/>
</dbReference>
<dbReference type="PDB" id="6EM1">
    <property type="method" value="EM"/>
    <property type="resolution" value="3.60 A"/>
    <property type="chains" value="V=1-137"/>
</dbReference>
<dbReference type="PDB" id="6EM4">
    <property type="method" value="EM"/>
    <property type="resolution" value="4.10 A"/>
    <property type="chains" value="V=1-137"/>
</dbReference>
<dbReference type="PDB" id="6EM5">
    <property type="method" value="EM"/>
    <property type="resolution" value="4.30 A"/>
    <property type="chains" value="V=1-137"/>
</dbReference>
<dbReference type="PDB" id="6FT6">
    <property type="method" value="EM"/>
    <property type="resolution" value="3.90 A"/>
    <property type="chains" value="V=1-137"/>
</dbReference>
<dbReference type="PDB" id="6GQ1">
    <property type="method" value="EM"/>
    <property type="resolution" value="4.40 A"/>
    <property type="chains" value="V=2-137"/>
</dbReference>
<dbReference type="PDB" id="6GQB">
    <property type="method" value="EM"/>
    <property type="resolution" value="3.90 A"/>
    <property type="chains" value="V=2-137"/>
</dbReference>
<dbReference type="PDB" id="6GQV">
    <property type="method" value="EM"/>
    <property type="resolution" value="4.00 A"/>
    <property type="chains" value="V=2-137"/>
</dbReference>
<dbReference type="PDB" id="6HD7">
    <property type="method" value="EM"/>
    <property type="resolution" value="3.40 A"/>
    <property type="chains" value="X=1-137"/>
</dbReference>
<dbReference type="PDB" id="6HHQ">
    <property type="method" value="X-ray"/>
    <property type="resolution" value="3.10 A"/>
    <property type="chains" value="6/CX=1-137"/>
</dbReference>
<dbReference type="PDB" id="6I7O">
    <property type="method" value="EM"/>
    <property type="resolution" value="5.30 A"/>
    <property type="chains" value="AB/XB=4-137"/>
</dbReference>
<dbReference type="PDB" id="6M62">
    <property type="method" value="EM"/>
    <property type="resolution" value="3.20 A"/>
    <property type="chains" value="V=1-137"/>
</dbReference>
<dbReference type="PDB" id="6N8J">
    <property type="method" value="EM"/>
    <property type="resolution" value="3.50 A"/>
    <property type="chains" value="V=1-137"/>
</dbReference>
<dbReference type="PDB" id="6N8K">
    <property type="method" value="EM"/>
    <property type="resolution" value="3.60 A"/>
    <property type="chains" value="V=1-137"/>
</dbReference>
<dbReference type="PDB" id="6N8L">
    <property type="method" value="EM"/>
    <property type="resolution" value="3.60 A"/>
    <property type="chains" value="V=1-137"/>
</dbReference>
<dbReference type="PDB" id="6N8M">
    <property type="method" value="EM"/>
    <property type="resolution" value="3.50 A"/>
    <property type="chains" value="i=1-137"/>
</dbReference>
<dbReference type="PDB" id="6N8N">
    <property type="method" value="EM"/>
    <property type="resolution" value="3.80 A"/>
    <property type="chains" value="i=1-137"/>
</dbReference>
<dbReference type="PDB" id="6N8O">
    <property type="method" value="EM"/>
    <property type="resolution" value="3.50 A"/>
    <property type="chains" value="i=1-137"/>
</dbReference>
<dbReference type="PDB" id="6OIG">
    <property type="method" value="EM"/>
    <property type="resolution" value="3.80 A"/>
    <property type="chains" value="V=2-137"/>
</dbReference>
<dbReference type="PDB" id="6Q8Y">
    <property type="method" value="EM"/>
    <property type="resolution" value="3.10 A"/>
    <property type="chains" value="AB=2-137"/>
</dbReference>
<dbReference type="PDB" id="6QIK">
    <property type="method" value="EM"/>
    <property type="resolution" value="3.10 A"/>
    <property type="chains" value="L=1-137"/>
</dbReference>
<dbReference type="PDB" id="6QT0">
    <property type="method" value="EM"/>
    <property type="resolution" value="3.40 A"/>
    <property type="chains" value="L=1-137"/>
</dbReference>
<dbReference type="PDB" id="6QTZ">
    <property type="method" value="EM"/>
    <property type="resolution" value="3.50 A"/>
    <property type="chains" value="L=1-137"/>
</dbReference>
<dbReference type="PDB" id="6R84">
    <property type="method" value="EM"/>
    <property type="resolution" value="3.60 A"/>
    <property type="chains" value="x=2-137"/>
</dbReference>
<dbReference type="PDB" id="6R86">
    <property type="method" value="EM"/>
    <property type="resolution" value="3.40 A"/>
    <property type="chains" value="x=2-137"/>
</dbReference>
<dbReference type="PDB" id="6R87">
    <property type="method" value="EM"/>
    <property type="resolution" value="3.40 A"/>
    <property type="chains" value="x=2-137"/>
</dbReference>
<dbReference type="PDB" id="6RI5">
    <property type="method" value="EM"/>
    <property type="resolution" value="3.30 A"/>
    <property type="chains" value="L=1-137"/>
</dbReference>
<dbReference type="PDB" id="6RZZ">
    <property type="method" value="EM"/>
    <property type="resolution" value="3.20 A"/>
    <property type="chains" value="L=1-137"/>
</dbReference>
<dbReference type="PDB" id="6S05">
    <property type="method" value="EM"/>
    <property type="resolution" value="3.90 A"/>
    <property type="chains" value="L=1-137"/>
</dbReference>
<dbReference type="PDB" id="6S47">
    <property type="method" value="EM"/>
    <property type="resolution" value="3.28 A"/>
    <property type="chains" value="AX=2-137"/>
</dbReference>
<dbReference type="PDB" id="6SNT">
    <property type="method" value="EM"/>
    <property type="resolution" value="2.80 A"/>
    <property type="chains" value="AB=1-137"/>
</dbReference>
<dbReference type="PDB" id="6SV4">
    <property type="method" value="EM"/>
    <property type="resolution" value="3.30 A"/>
    <property type="chains" value="AB/XB/zB=1-137"/>
</dbReference>
<dbReference type="PDB" id="6T4Q">
    <property type="method" value="EM"/>
    <property type="resolution" value="2.60 A"/>
    <property type="chains" value="LV=2-137"/>
</dbReference>
<dbReference type="PDB" id="6T7I">
    <property type="method" value="EM"/>
    <property type="resolution" value="3.20 A"/>
    <property type="chains" value="LV=1-137"/>
</dbReference>
<dbReference type="PDB" id="6T7T">
    <property type="method" value="EM"/>
    <property type="resolution" value="3.10 A"/>
    <property type="chains" value="LV=1-137"/>
</dbReference>
<dbReference type="PDB" id="6T83">
    <property type="method" value="EM"/>
    <property type="resolution" value="4.00 A"/>
    <property type="chains" value="G/Vy=1-137"/>
</dbReference>
<dbReference type="PDB" id="6TB3">
    <property type="method" value="EM"/>
    <property type="resolution" value="2.80 A"/>
    <property type="chains" value="AB=2-137"/>
</dbReference>
<dbReference type="PDB" id="6TNU">
    <property type="method" value="EM"/>
    <property type="resolution" value="3.10 A"/>
    <property type="chains" value="AB=2-137"/>
</dbReference>
<dbReference type="PDB" id="6WOO">
    <property type="method" value="EM"/>
    <property type="resolution" value="2.90 A"/>
    <property type="chains" value="V=5-136"/>
</dbReference>
<dbReference type="PDB" id="6XIQ">
    <property type="method" value="EM"/>
    <property type="resolution" value="4.20 A"/>
    <property type="chains" value="V=1-137"/>
</dbReference>
<dbReference type="PDB" id="6XIR">
    <property type="method" value="EM"/>
    <property type="resolution" value="3.20 A"/>
    <property type="chains" value="V=1-137"/>
</dbReference>
<dbReference type="PDB" id="6YLG">
    <property type="method" value="EM"/>
    <property type="resolution" value="3.00 A"/>
    <property type="chains" value="V=1-137"/>
</dbReference>
<dbReference type="PDB" id="6YLH">
    <property type="method" value="EM"/>
    <property type="resolution" value="3.10 A"/>
    <property type="chains" value="V=1-137"/>
</dbReference>
<dbReference type="PDB" id="6YLX">
    <property type="method" value="EM"/>
    <property type="resolution" value="3.90 A"/>
    <property type="chains" value="V=1-137"/>
</dbReference>
<dbReference type="PDB" id="6YLY">
    <property type="method" value="EM"/>
    <property type="resolution" value="3.80 A"/>
    <property type="chains" value="V=1-137"/>
</dbReference>
<dbReference type="PDB" id="6Z6J">
    <property type="method" value="EM"/>
    <property type="resolution" value="3.40 A"/>
    <property type="chains" value="LV=1-137"/>
</dbReference>
<dbReference type="PDB" id="6Z6K">
    <property type="method" value="EM"/>
    <property type="resolution" value="3.40 A"/>
    <property type="chains" value="LV=1-137"/>
</dbReference>
<dbReference type="PDB" id="7AZY">
    <property type="method" value="EM"/>
    <property type="resolution" value="2.88 A"/>
    <property type="chains" value="c=1-137"/>
</dbReference>
<dbReference type="PDB" id="7B7D">
    <property type="method" value="EM"/>
    <property type="resolution" value="3.30 A"/>
    <property type="chains" value="Lr=2-137"/>
</dbReference>
<dbReference type="PDB" id="7BT6">
    <property type="method" value="EM"/>
    <property type="resolution" value="3.12 A"/>
    <property type="chains" value="V=1-137"/>
</dbReference>
<dbReference type="PDB" id="7BTB">
    <property type="method" value="EM"/>
    <property type="resolution" value="3.22 A"/>
    <property type="chains" value="V=1-137"/>
</dbReference>
<dbReference type="PDB" id="7MPI">
    <property type="method" value="EM"/>
    <property type="resolution" value="3.05 A"/>
    <property type="chains" value="AV=2-137"/>
</dbReference>
<dbReference type="PDB" id="7MPJ">
    <property type="method" value="EM"/>
    <property type="resolution" value="2.70 A"/>
    <property type="chains" value="AV=2-137"/>
</dbReference>
<dbReference type="PDB" id="7N8B">
    <property type="method" value="EM"/>
    <property type="resolution" value="3.05 A"/>
    <property type="chains" value="AV=2-137"/>
</dbReference>
<dbReference type="PDB" id="7NAC">
    <property type="method" value="EM"/>
    <property type="resolution" value="3.04 A"/>
    <property type="chains" value="V=1-137"/>
</dbReference>
<dbReference type="PDB" id="7NAD">
    <property type="method" value="EM"/>
    <property type="resolution" value="3.04 A"/>
    <property type="chains" value="V=17-74"/>
</dbReference>
<dbReference type="PDB" id="7NAF">
    <property type="method" value="EM"/>
    <property type="resolution" value="3.13 A"/>
    <property type="chains" value="V=4-137"/>
</dbReference>
<dbReference type="PDB" id="7NRC">
    <property type="method" value="EM"/>
    <property type="resolution" value="3.90 A"/>
    <property type="chains" value="LX=2-137"/>
</dbReference>
<dbReference type="PDB" id="7NRD">
    <property type="method" value="EM"/>
    <property type="resolution" value="4.36 A"/>
    <property type="chains" value="LX=2-137"/>
</dbReference>
<dbReference type="PDB" id="7OF1">
    <property type="method" value="EM"/>
    <property type="resolution" value="3.10 A"/>
    <property type="chains" value="V=1-137"/>
</dbReference>
<dbReference type="PDB" id="7OH3">
    <property type="method" value="EM"/>
    <property type="resolution" value="3.40 A"/>
    <property type="chains" value="V=1-137"/>
</dbReference>
<dbReference type="PDB" id="7OHP">
    <property type="method" value="EM"/>
    <property type="resolution" value="3.90 A"/>
    <property type="chains" value="V=1-137"/>
</dbReference>
<dbReference type="PDB" id="7OHQ">
    <property type="method" value="EM"/>
    <property type="resolution" value="3.10 A"/>
    <property type="chains" value="V=1-137"/>
</dbReference>
<dbReference type="PDB" id="7OHR">
    <property type="method" value="EM"/>
    <property type="resolution" value="4.72 A"/>
    <property type="chains" value="V=1-137"/>
</dbReference>
<dbReference type="PDB" id="7OHS">
    <property type="method" value="EM"/>
    <property type="resolution" value="4.38 A"/>
    <property type="chains" value="V=1-137"/>
</dbReference>
<dbReference type="PDB" id="7OHT">
    <property type="method" value="EM"/>
    <property type="resolution" value="4.70 A"/>
    <property type="chains" value="V=1-137"/>
</dbReference>
<dbReference type="PDB" id="7OHU">
    <property type="method" value="EM"/>
    <property type="resolution" value="3.70 A"/>
    <property type="chains" value="V=1-137"/>
</dbReference>
<dbReference type="PDB" id="7OHV">
    <property type="method" value="EM"/>
    <property type="resolution" value="3.90 A"/>
    <property type="chains" value="V=1-137"/>
</dbReference>
<dbReference type="PDB" id="7OHW">
    <property type="method" value="EM"/>
    <property type="resolution" value="3.50 A"/>
    <property type="chains" value="V=1-137"/>
</dbReference>
<dbReference type="PDB" id="7OHY">
    <property type="method" value="EM"/>
    <property type="resolution" value="3.90 A"/>
    <property type="chains" value="V=1-137"/>
</dbReference>
<dbReference type="PDB" id="7R7A">
    <property type="method" value="EM"/>
    <property type="resolution" value="3.04 A"/>
    <property type="chains" value="V=1-137"/>
</dbReference>
<dbReference type="PDB" id="7TOO">
    <property type="method" value="EM"/>
    <property type="resolution" value="2.70 A"/>
    <property type="chains" value="AL23=1-137"/>
</dbReference>
<dbReference type="PDB" id="7TOP">
    <property type="method" value="EM"/>
    <property type="resolution" value="2.40 A"/>
    <property type="chains" value="AL23=1-137"/>
</dbReference>
<dbReference type="PDB" id="7U0H">
    <property type="method" value="EM"/>
    <property type="resolution" value="2.76 A"/>
    <property type="chains" value="V=1-137"/>
</dbReference>
<dbReference type="PDB" id="7UG6">
    <property type="method" value="EM"/>
    <property type="resolution" value="2.90 A"/>
    <property type="chains" value="V=1-137"/>
</dbReference>
<dbReference type="PDB" id="7UOO">
    <property type="method" value="EM"/>
    <property type="resolution" value="2.34 A"/>
    <property type="chains" value="V=1-137"/>
</dbReference>
<dbReference type="PDB" id="7UQB">
    <property type="method" value="EM"/>
    <property type="resolution" value="2.43 A"/>
    <property type="chains" value="V=1-137"/>
</dbReference>
<dbReference type="PDB" id="7UQZ">
    <property type="method" value="EM"/>
    <property type="resolution" value="2.44 A"/>
    <property type="chains" value="V=1-137"/>
</dbReference>
<dbReference type="PDB" id="7V08">
    <property type="method" value="EM"/>
    <property type="resolution" value="2.36 A"/>
    <property type="chains" value="V=1-137"/>
</dbReference>
<dbReference type="PDB" id="7Z34">
    <property type="method" value="EM"/>
    <property type="resolution" value="3.80 A"/>
    <property type="chains" value="V=1-137"/>
</dbReference>
<dbReference type="PDB" id="7ZPQ">
    <property type="method" value="EM"/>
    <property type="resolution" value="3.47 A"/>
    <property type="chains" value="BU=2-137"/>
</dbReference>
<dbReference type="PDB" id="7ZRS">
    <property type="method" value="EM"/>
    <property type="resolution" value="4.80 A"/>
    <property type="chains" value="BU=2-137"/>
</dbReference>
<dbReference type="PDB" id="7ZS5">
    <property type="method" value="EM"/>
    <property type="resolution" value="3.20 A"/>
    <property type="chains" value="BW=2-137"/>
</dbReference>
<dbReference type="PDB" id="7ZUW">
    <property type="method" value="EM"/>
    <property type="resolution" value="4.30 A"/>
    <property type="chains" value="BU=2-137"/>
</dbReference>
<dbReference type="PDB" id="7ZUX">
    <property type="method" value="EM"/>
    <property type="resolution" value="2.50 A"/>
    <property type="chains" value="EU=2-137"/>
</dbReference>
<dbReference type="PDB" id="7ZW0">
    <property type="method" value="EM"/>
    <property type="resolution" value="2.40 A"/>
    <property type="chains" value="LY=1-137"/>
</dbReference>
<dbReference type="PDB" id="8AAF">
    <property type="method" value="EM"/>
    <property type="resolution" value="2.50 A"/>
    <property type="chains" value="I=1-137"/>
</dbReference>
<dbReference type="PDB" id="8AGT">
    <property type="method" value="EM"/>
    <property type="resolution" value="2.60 A"/>
    <property type="chains" value="I=1-137"/>
</dbReference>
<dbReference type="PDB" id="8AGU">
    <property type="method" value="EM"/>
    <property type="resolution" value="2.70 A"/>
    <property type="chains" value="I=1-137"/>
</dbReference>
<dbReference type="PDB" id="8AGV">
    <property type="method" value="EM"/>
    <property type="resolution" value="2.60 A"/>
    <property type="chains" value="I=1-137"/>
</dbReference>
<dbReference type="PDB" id="8AGW">
    <property type="method" value="EM"/>
    <property type="resolution" value="2.60 A"/>
    <property type="chains" value="I=1-137"/>
</dbReference>
<dbReference type="PDB" id="8AGX">
    <property type="method" value="EM"/>
    <property type="resolution" value="2.40 A"/>
    <property type="chains" value="I=1-137"/>
</dbReference>
<dbReference type="PDB" id="8AGZ">
    <property type="method" value="EM"/>
    <property type="resolution" value="2.60 A"/>
    <property type="chains" value="I=1-137"/>
</dbReference>
<dbReference type="PDB" id="8BIP">
    <property type="method" value="EM"/>
    <property type="resolution" value="3.10 A"/>
    <property type="chains" value="LV=2-137"/>
</dbReference>
<dbReference type="PDB" id="8BJQ">
    <property type="method" value="EM"/>
    <property type="resolution" value="3.80 A"/>
    <property type="chains" value="LV=2-137"/>
</dbReference>
<dbReference type="PDB" id="8BN3">
    <property type="method" value="EM"/>
    <property type="resolution" value="2.40 A"/>
    <property type="chains" value="N3=2-137"/>
</dbReference>
<dbReference type="PDB" id="8BQD">
    <property type="method" value="EM"/>
    <property type="resolution" value="3.90 A"/>
    <property type="chains" value="AB=2-137"/>
</dbReference>
<dbReference type="PDB" id="8BQX">
    <property type="method" value="EM"/>
    <property type="resolution" value="3.80 A"/>
    <property type="chains" value="AB=2-137"/>
</dbReference>
<dbReference type="PDB" id="8CCS">
    <property type="method" value="EM"/>
    <property type="resolution" value="1.97 A"/>
    <property type="chains" value="H=1-137"/>
</dbReference>
<dbReference type="PDB" id="8CDL">
    <property type="method" value="EM"/>
    <property type="resolution" value="2.72 A"/>
    <property type="chains" value="H=9-137"/>
</dbReference>
<dbReference type="PDB" id="8CDR">
    <property type="method" value="EM"/>
    <property type="resolution" value="2.04 A"/>
    <property type="chains" value="H=1-137"/>
</dbReference>
<dbReference type="PDB" id="8CEH">
    <property type="method" value="EM"/>
    <property type="resolution" value="2.05 A"/>
    <property type="chains" value="H=1-137"/>
</dbReference>
<dbReference type="PDB" id="8CF5">
    <property type="method" value="EM"/>
    <property type="resolution" value="2.71 A"/>
    <property type="chains" value="H=1-137"/>
</dbReference>
<dbReference type="PDB" id="8CG8">
    <property type="method" value="EM"/>
    <property type="resolution" value="2.57 A"/>
    <property type="chains" value="H=1-137"/>
</dbReference>
<dbReference type="PDB" id="8CGN">
    <property type="method" value="EM"/>
    <property type="resolution" value="2.28 A"/>
    <property type="chains" value="H=1-137"/>
</dbReference>
<dbReference type="PDB" id="8CIV">
    <property type="method" value="EM"/>
    <property type="resolution" value="2.47 A"/>
    <property type="chains" value="H=1-137"/>
</dbReference>
<dbReference type="PDB" id="8CKU">
    <property type="method" value="EM"/>
    <property type="resolution" value="3.11 A"/>
    <property type="chains" value="H=1-137"/>
</dbReference>
<dbReference type="PDB" id="8CMJ">
    <property type="method" value="EM"/>
    <property type="resolution" value="3.79 A"/>
    <property type="chains" value="H=1-137"/>
</dbReference>
<dbReference type="PDB" id="8EUB">
    <property type="method" value="EM"/>
    <property type="resolution" value="2.52 A"/>
    <property type="chains" value="AV=1-137"/>
</dbReference>
<dbReference type="PDB" id="8EVP">
    <property type="method" value="EM"/>
    <property type="resolution" value="2.38 A"/>
    <property type="chains" value="AV=1-137"/>
</dbReference>
<dbReference type="PDB" id="8EVQ">
    <property type="method" value="EM"/>
    <property type="resolution" value="2.72 A"/>
    <property type="chains" value="AV=1-137"/>
</dbReference>
<dbReference type="PDB" id="8EVR">
    <property type="method" value="EM"/>
    <property type="resolution" value="2.87 A"/>
    <property type="chains" value="AV=1-137"/>
</dbReference>
<dbReference type="PDB" id="8EVS">
    <property type="method" value="EM"/>
    <property type="resolution" value="2.62 A"/>
    <property type="chains" value="AV=1-137"/>
</dbReference>
<dbReference type="PDB" id="8EVT">
    <property type="method" value="EM"/>
    <property type="resolution" value="2.20 A"/>
    <property type="chains" value="AV=1-137"/>
</dbReference>
<dbReference type="PDB" id="8EWB">
    <property type="method" value="EM"/>
    <property type="resolution" value="2.87 A"/>
    <property type="chains" value="AV=1-137"/>
</dbReference>
<dbReference type="PDB" id="8EWC">
    <property type="method" value="EM"/>
    <property type="resolution" value="2.45 A"/>
    <property type="chains" value="AV=1-137"/>
</dbReference>
<dbReference type="PDB" id="8HFR">
    <property type="method" value="EM"/>
    <property type="resolution" value="2.64 A"/>
    <property type="chains" value="V5=1-137"/>
</dbReference>
<dbReference type="PDB" id="8K2D">
    <property type="method" value="EM"/>
    <property type="resolution" value="3.20 A"/>
    <property type="chains" value="LV=1-137"/>
</dbReference>
<dbReference type="PDB" id="8K82">
    <property type="method" value="EM"/>
    <property type="resolution" value="3.00 A"/>
    <property type="chains" value="LV=1-137"/>
</dbReference>
<dbReference type="PDB" id="8P4V">
    <property type="method" value="X-ray"/>
    <property type="resolution" value="3.16 A"/>
    <property type="chains" value="6/CX=1-137"/>
</dbReference>
<dbReference type="PDB" id="8P8M">
    <property type="method" value="EM"/>
    <property type="resolution" value="2.66 A"/>
    <property type="chains" value="QV=1-137"/>
</dbReference>
<dbReference type="PDB" id="8P8N">
    <property type="method" value="EM"/>
    <property type="resolution" value="2.15 A"/>
    <property type="chains" value="QV=1-137"/>
</dbReference>
<dbReference type="PDB" id="8P8U">
    <property type="method" value="EM"/>
    <property type="resolution" value="2.23 A"/>
    <property type="chains" value="QV=1-137"/>
</dbReference>
<dbReference type="PDB" id="8P9A">
    <property type="method" value="X-ray"/>
    <property type="resolution" value="2.90 A"/>
    <property type="chains" value="6/CX=1-137"/>
</dbReference>
<dbReference type="PDB" id="8PFR">
    <property type="method" value="EM"/>
    <property type="resolution" value="2.15 A"/>
    <property type="chains" value="QV=1-137"/>
</dbReference>
<dbReference type="PDB" id="8T2X">
    <property type="method" value="EM"/>
    <property type="resolution" value="2.46 A"/>
    <property type="chains" value="AV=1-137"/>
</dbReference>
<dbReference type="PDB" id="8T2Y">
    <property type="method" value="EM"/>
    <property type="resolution" value="2.20 A"/>
    <property type="chains" value="AV=1-137"/>
</dbReference>
<dbReference type="PDB" id="8T2Z">
    <property type="method" value="EM"/>
    <property type="resolution" value="2.40 A"/>
    <property type="chains" value="AV=1-137"/>
</dbReference>
<dbReference type="PDB" id="8T30">
    <property type="method" value="EM"/>
    <property type="resolution" value="2.88 A"/>
    <property type="chains" value="AV=1-137"/>
</dbReference>
<dbReference type="PDB" id="8T3A">
    <property type="method" value="EM"/>
    <property type="resolution" value="2.86 A"/>
    <property type="chains" value="AV=1-137"/>
</dbReference>
<dbReference type="PDB" id="8T3B">
    <property type="method" value="EM"/>
    <property type="resolution" value="3.08 A"/>
    <property type="chains" value="AV=1-137"/>
</dbReference>
<dbReference type="PDB" id="8T3C">
    <property type="method" value="EM"/>
    <property type="resolution" value="3.86 A"/>
    <property type="chains" value="AV=1-137"/>
</dbReference>
<dbReference type="PDB" id="8T3D">
    <property type="method" value="EM"/>
    <property type="resolution" value="2.95 A"/>
    <property type="chains" value="AV=1-137"/>
</dbReference>
<dbReference type="PDB" id="8T3E">
    <property type="method" value="EM"/>
    <property type="resolution" value="3.04 A"/>
    <property type="chains" value="AV=1-137"/>
</dbReference>
<dbReference type="PDB" id="8T3F">
    <property type="method" value="EM"/>
    <property type="resolution" value="3.09 A"/>
    <property type="chains" value="AV=1-137"/>
</dbReference>
<dbReference type="PDB" id="8UT0">
    <property type="method" value="EM"/>
    <property type="resolution" value="3.22 A"/>
    <property type="chains" value="LX=2-137"/>
</dbReference>
<dbReference type="PDB" id="8UTI">
    <property type="method" value="EM"/>
    <property type="resolution" value="3.13 A"/>
    <property type="chains" value="LX=2-137"/>
</dbReference>
<dbReference type="PDB" id="8V83">
    <property type="method" value="EM"/>
    <property type="resolution" value="2.53 A"/>
    <property type="chains" value="V=1-137"/>
</dbReference>
<dbReference type="PDB" id="8V84">
    <property type="method" value="EM"/>
    <property type="resolution" value="2.70 A"/>
    <property type="chains" value="V=1-137"/>
</dbReference>
<dbReference type="PDB" id="8V87">
    <property type="method" value="EM"/>
    <property type="resolution" value="2.66 A"/>
    <property type="chains" value="V=1-137"/>
</dbReference>
<dbReference type="PDB" id="8XU8">
    <property type="method" value="EM"/>
    <property type="resolution" value="3.40 A"/>
    <property type="chains" value="X=2-137"/>
</dbReference>
<dbReference type="PDB" id="8Y0U">
    <property type="method" value="EM"/>
    <property type="resolution" value="3.59 A"/>
    <property type="chains" value="LV=1-137"/>
</dbReference>
<dbReference type="PDB" id="8YLD">
    <property type="method" value="EM"/>
    <property type="resolution" value="3.90 A"/>
    <property type="chains" value="X=2-137"/>
</dbReference>
<dbReference type="PDB" id="8YLR">
    <property type="method" value="EM"/>
    <property type="resolution" value="3.90 A"/>
    <property type="chains" value="X=2-137"/>
</dbReference>
<dbReference type="PDB" id="8Z70">
    <property type="method" value="EM"/>
    <property type="resolution" value="3.20 A"/>
    <property type="chains" value="X=2-137"/>
</dbReference>
<dbReference type="PDB" id="8Z71">
    <property type="method" value="EM"/>
    <property type="resolution" value="3.60 A"/>
    <property type="chains" value="X=2-137"/>
</dbReference>
<dbReference type="PDB" id="9F9S">
    <property type="method" value="EM"/>
    <property type="resolution" value="2.90 A"/>
    <property type="chains" value="La/Ma=1-137"/>
</dbReference>
<dbReference type="PDBsum" id="2X7N"/>
<dbReference type="PDBsum" id="3J16"/>
<dbReference type="PDBsum" id="3J6X"/>
<dbReference type="PDBsum" id="3J6Y"/>
<dbReference type="PDBsum" id="3J77"/>
<dbReference type="PDBsum" id="3J78"/>
<dbReference type="PDBsum" id="3JCT"/>
<dbReference type="PDBsum" id="4U3M"/>
<dbReference type="PDBsum" id="4U3N"/>
<dbReference type="PDBsum" id="4U3U"/>
<dbReference type="PDBsum" id="4U4N"/>
<dbReference type="PDBsum" id="4U4O"/>
<dbReference type="PDBsum" id="4U4Q"/>
<dbReference type="PDBsum" id="4U4R"/>
<dbReference type="PDBsum" id="4U4U"/>
<dbReference type="PDBsum" id="4U4Y"/>
<dbReference type="PDBsum" id="4U4Z"/>
<dbReference type="PDBsum" id="4U50"/>
<dbReference type="PDBsum" id="4U51"/>
<dbReference type="PDBsum" id="4U52"/>
<dbReference type="PDBsum" id="4U53"/>
<dbReference type="PDBsum" id="4U55"/>
<dbReference type="PDBsum" id="4U56"/>
<dbReference type="PDBsum" id="4U6F"/>
<dbReference type="PDBsum" id="4V4B"/>
<dbReference type="PDBsum" id="4V5Z"/>
<dbReference type="PDBsum" id="4V6I"/>
<dbReference type="PDBsum" id="4V7F"/>
<dbReference type="PDBsum" id="4V7R"/>
<dbReference type="PDBsum" id="4V88"/>
<dbReference type="PDBsum" id="4V8T"/>
<dbReference type="PDBsum" id="4V8Y"/>
<dbReference type="PDBsum" id="4V8Z"/>
<dbReference type="PDBsum" id="4V91"/>
<dbReference type="PDBsum" id="5APN"/>
<dbReference type="PDBsum" id="5APO"/>
<dbReference type="PDBsum" id="5DAT"/>
<dbReference type="PDBsum" id="5DC3"/>
<dbReference type="PDBsum" id="5DGE"/>
<dbReference type="PDBsum" id="5DGF"/>
<dbReference type="PDBsum" id="5DGV"/>
<dbReference type="PDBsum" id="5FCI"/>
<dbReference type="PDBsum" id="5FCJ"/>
<dbReference type="PDBsum" id="5GAK"/>
<dbReference type="PDBsum" id="5H4P"/>
<dbReference type="PDBsum" id="5I4L"/>
<dbReference type="PDBsum" id="5JCS"/>
<dbReference type="PDBsum" id="5JUO"/>
<dbReference type="PDBsum" id="5JUP"/>
<dbReference type="PDBsum" id="5JUS"/>
<dbReference type="PDBsum" id="5JUT"/>
<dbReference type="PDBsum" id="5JUU"/>
<dbReference type="PDBsum" id="5LYB"/>
<dbReference type="PDBsum" id="5M1J"/>
<dbReference type="PDBsum" id="5MC6"/>
<dbReference type="PDBsum" id="5MEI"/>
<dbReference type="PDBsum" id="5NDG"/>
<dbReference type="PDBsum" id="5NDV"/>
<dbReference type="PDBsum" id="5NDW"/>
<dbReference type="PDBsum" id="5OBM"/>
<dbReference type="PDBsum" id="5ON6"/>
<dbReference type="PDBsum" id="5T62"/>
<dbReference type="PDBsum" id="5T6R"/>
<dbReference type="PDBsum" id="5TBW"/>
<dbReference type="PDBsum" id="5TGA"/>
<dbReference type="PDBsum" id="5TGM"/>
<dbReference type="PDBsum" id="6C0F"/>
<dbReference type="PDBsum" id="6ELZ"/>
<dbReference type="PDBsum" id="6EM1"/>
<dbReference type="PDBsum" id="6EM4"/>
<dbReference type="PDBsum" id="6EM5"/>
<dbReference type="PDBsum" id="6FT6"/>
<dbReference type="PDBsum" id="6GQ1"/>
<dbReference type="PDBsum" id="6GQB"/>
<dbReference type="PDBsum" id="6GQV"/>
<dbReference type="PDBsum" id="6HD7"/>
<dbReference type="PDBsum" id="6HHQ"/>
<dbReference type="PDBsum" id="6I7O"/>
<dbReference type="PDBsum" id="6M62"/>
<dbReference type="PDBsum" id="6N8J"/>
<dbReference type="PDBsum" id="6N8K"/>
<dbReference type="PDBsum" id="6N8L"/>
<dbReference type="PDBsum" id="6N8M"/>
<dbReference type="PDBsum" id="6N8N"/>
<dbReference type="PDBsum" id="6N8O"/>
<dbReference type="PDBsum" id="6OIG"/>
<dbReference type="PDBsum" id="6Q8Y"/>
<dbReference type="PDBsum" id="6QIK"/>
<dbReference type="PDBsum" id="6QT0"/>
<dbReference type="PDBsum" id="6QTZ"/>
<dbReference type="PDBsum" id="6R84"/>
<dbReference type="PDBsum" id="6R86"/>
<dbReference type="PDBsum" id="6R87"/>
<dbReference type="PDBsum" id="6RI5"/>
<dbReference type="PDBsum" id="6RZZ"/>
<dbReference type="PDBsum" id="6S05"/>
<dbReference type="PDBsum" id="6S47"/>
<dbReference type="PDBsum" id="6SNT"/>
<dbReference type="PDBsum" id="6SV4"/>
<dbReference type="PDBsum" id="6T4Q"/>
<dbReference type="PDBsum" id="6T7I"/>
<dbReference type="PDBsum" id="6T7T"/>
<dbReference type="PDBsum" id="6T83"/>
<dbReference type="PDBsum" id="6TB3"/>
<dbReference type="PDBsum" id="6TNU"/>
<dbReference type="PDBsum" id="6WOO"/>
<dbReference type="PDBsum" id="6XIQ"/>
<dbReference type="PDBsum" id="6XIR"/>
<dbReference type="PDBsum" id="6YLG"/>
<dbReference type="PDBsum" id="6YLH"/>
<dbReference type="PDBsum" id="6YLX"/>
<dbReference type="PDBsum" id="6YLY"/>
<dbReference type="PDBsum" id="6Z6J"/>
<dbReference type="PDBsum" id="6Z6K"/>
<dbReference type="PDBsum" id="7AZY"/>
<dbReference type="PDBsum" id="7B7D"/>
<dbReference type="PDBsum" id="7BT6"/>
<dbReference type="PDBsum" id="7BTB"/>
<dbReference type="PDBsum" id="7MPI"/>
<dbReference type="PDBsum" id="7MPJ"/>
<dbReference type="PDBsum" id="7N8B"/>
<dbReference type="PDBsum" id="7NAC"/>
<dbReference type="PDBsum" id="7NAD"/>
<dbReference type="PDBsum" id="7NAF"/>
<dbReference type="PDBsum" id="7NRC"/>
<dbReference type="PDBsum" id="7NRD"/>
<dbReference type="PDBsum" id="7OF1"/>
<dbReference type="PDBsum" id="7OH3"/>
<dbReference type="PDBsum" id="7OHP"/>
<dbReference type="PDBsum" id="7OHQ"/>
<dbReference type="PDBsum" id="7OHR"/>
<dbReference type="PDBsum" id="7OHS"/>
<dbReference type="PDBsum" id="7OHT"/>
<dbReference type="PDBsum" id="7OHU"/>
<dbReference type="PDBsum" id="7OHV"/>
<dbReference type="PDBsum" id="7OHW"/>
<dbReference type="PDBsum" id="7OHY"/>
<dbReference type="PDBsum" id="7R7A"/>
<dbReference type="PDBsum" id="7TOO"/>
<dbReference type="PDBsum" id="7TOP"/>
<dbReference type="PDBsum" id="7U0H"/>
<dbReference type="PDBsum" id="7UG6"/>
<dbReference type="PDBsum" id="7UOO"/>
<dbReference type="PDBsum" id="7UQB"/>
<dbReference type="PDBsum" id="7UQZ"/>
<dbReference type="PDBsum" id="7V08"/>
<dbReference type="PDBsum" id="7Z34"/>
<dbReference type="PDBsum" id="7ZPQ"/>
<dbReference type="PDBsum" id="7ZRS"/>
<dbReference type="PDBsum" id="7ZS5"/>
<dbReference type="PDBsum" id="7ZUW"/>
<dbReference type="PDBsum" id="7ZUX"/>
<dbReference type="PDBsum" id="7ZW0"/>
<dbReference type="PDBsum" id="8AAF"/>
<dbReference type="PDBsum" id="8AGT"/>
<dbReference type="PDBsum" id="8AGU"/>
<dbReference type="PDBsum" id="8AGV"/>
<dbReference type="PDBsum" id="8AGW"/>
<dbReference type="PDBsum" id="8AGX"/>
<dbReference type="PDBsum" id="8AGZ"/>
<dbReference type="PDBsum" id="8BIP"/>
<dbReference type="PDBsum" id="8BJQ"/>
<dbReference type="PDBsum" id="8BN3"/>
<dbReference type="PDBsum" id="8BQD"/>
<dbReference type="PDBsum" id="8BQX"/>
<dbReference type="PDBsum" id="8CCS"/>
<dbReference type="PDBsum" id="8CDL"/>
<dbReference type="PDBsum" id="8CDR"/>
<dbReference type="PDBsum" id="8CEH"/>
<dbReference type="PDBsum" id="8CF5"/>
<dbReference type="PDBsum" id="8CG8"/>
<dbReference type="PDBsum" id="8CGN"/>
<dbReference type="PDBsum" id="8CIV"/>
<dbReference type="PDBsum" id="8CKU"/>
<dbReference type="PDBsum" id="8CMJ"/>
<dbReference type="PDBsum" id="8EUB"/>
<dbReference type="PDBsum" id="8EVP"/>
<dbReference type="PDBsum" id="8EVQ"/>
<dbReference type="PDBsum" id="8EVR"/>
<dbReference type="PDBsum" id="8EVS"/>
<dbReference type="PDBsum" id="8EVT"/>
<dbReference type="PDBsum" id="8EWB"/>
<dbReference type="PDBsum" id="8EWC"/>
<dbReference type="PDBsum" id="8HFR"/>
<dbReference type="PDBsum" id="8K2D"/>
<dbReference type="PDBsum" id="8K82"/>
<dbReference type="PDBsum" id="8P4V"/>
<dbReference type="PDBsum" id="8P8M"/>
<dbReference type="PDBsum" id="8P8N"/>
<dbReference type="PDBsum" id="8P8U"/>
<dbReference type="PDBsum" id="8P9A"/>
<dbReference type="PDBsum" id="8PFR"/>
<dbReference type="PDBsum" id="8T2X"/>
<dbReference type="PDBsum" id="8T2Y"/>
<dbReference type="PDBsum" id="8T2Z"/>
<dbReference type="PDBsum" id="8T30"/>
<dbReference type="PDBsum" id="8T3A"/>
<dbReference type="PDBsum" id="8T3B"/>
<dbReference type="PDBsum" id="8T3C"/>
<dbReference type="PDBsum" id="8T3D"/>
<dbReference type="PDBsum" id="8T3E"/>
<dbReference type="PDBsum" id="8T3F"/>
<dbReference type="PDBsum" id="8UT0"/>
<dbReference type="PDBsum" id="8UTI"/>
<dbReference type="PDBsum" id="8V83"/>
<dbReference type="PDBsum" id="8V84"/>
<dbReference type="PDBsum" id="8V87"/>
<dbReference type="PDBsum" id="8XU8"/>
<dbReference type="PDBsum" id="8Y0U"/>
<dbReference type="PDBsum" id="8YLD"/>
<dbReference type="PDBsum" id="8YLR"/>
<dbReference type="PDBsum" id="8Z70"/>
<dbReference type="PDBsum" id="8Z71"/>
<dbReference type="PDBsum" id="9F9S"/>
<dbReference type="EMDB" id="EMD-0047"/>
<dbReference type="EMDB" id="EMD-0048"/>
<dbReference type="EMDB" id="EMD-0049"/>
<dbReference type="EMDB" id="EMD-0202"/>
<dbReference type="EMDB" id="EMD-0369"/>
<dbReference type="EMDB" id="EMD-0370"/>
<dbReference type="EMDB" id="EMD-0371"/>
<dbReference type="EMDB" id="EMD-0372"/>
<dbReference type="EMDB" id="EMD-0373"/>
<dbReference type="EMDB" id="EMD-0374"/>
<dbReference type="EMDB" id="EMD-10068"/>
<dbReference type="EMDB" id="EMD-10071"/>
<dbReference type="EMDB" id="EMD-10098"/>
<dbReference type="EMDB" id="EMD-10262"/>
<dbReference type="EMDB" id="EMD-10315"/>
<dbReference type="EMDB" id="EMD-10377"/>
<dbReference type="EMDB" id="EMD-10396"/>
<dbReference type="EMDB" id="EMD-10397"/>
<dbReference type="EMDB" id="EMD-10398"/>
<dbReference type="EMDB" id="EMD-10431"/>
<dbReference type="EMDB" id="EMD-10537"/>
<dbReference type="EMDB" id="EMD-10838"/>
<dbReference type="EMDB" id="EMD-10839"/>
<dbReference type="EMDB" id="EMD-10841"/>
<dbReference type="EMDB" id="EMD-10842"/>
<dbReference type="EMDB" id="EMD-11096"/>
<dbReference type="EMDB" id="EMD-11097"/>
<dbReference type="EMDB" id="EMD-11951"/>
<dbReference type="EMDB" id="EMD-12081"/>
<dbReference type="EMDB" id="EMD-12534"/>
<dbReference type="EMDB" id="EMD-12535"/>
<dbReference type="EMDB" id="EMD-12866"/>
<dbReference type="EMDB" id="EMD-12892"/>
<dbReference type="EMDB" id="EMD-12904"/>
<dbReference type="EMDB" id="EMD-12905"/>
<dbReference type="EMDB" id="EMD-12906"/>
<dbReference type="EMDB" id="EMD-12907"/>
<dbReference type="EMDB" id="EMD-12908"/>
<dbReference type="EMDB" id="EMD-12909"/>
<dbReference type="EMDB" id="EMD-12910"/>
<dbReference type="EMDB" id="EMD-12911"/>
<dbReference type="EMDB" id="EMD-12913"/>
<dbReference type="EMDB" id="EMD-14471"/>
<dbReference type="EMDB" id="EMD-14861"/>
<dbReference type="EMDB" id="EMD-14921"/>
<dbReference type="EMDB" id="EMD-14926"/>
<dbReference type="EMDB" id="EMD-14978"/>
<dbReference type="EMDB" id="EMD-14979"/>
<dbReference type="EMDB" id="EMD-14990"/>
<dbReference type="EMDB" id="EMD-15296"/>
<dbReference type="EMDB" id="EMD-15423"/>
<dbReference type="EMDB" id="EMD-15424"/>
<dbReference type="EMDB" id="EMD-15425"/>
<dbReference type="EMDB" id="EMD-15426"/>
<dbReference type="EMDB" id="EMD-15427"/>
<dbReference type="EMDB" id="EMD-15428"/>
<dbReference type="EMDB" id="EMD-16086"/>
<dbReference type="EMDB" id="EMD-16090"/>
<dbReference type="EMDB" id="EMD-16127"/>
<dbReference type="EMDB" id="EMD-16182"/>
<dbReference type="EMDB" id="EMD-16191"/>
<dbReference type="EMDB" id="EMD-16563"/>
<dbReference type="EMDB" id="EMD-16591"/>
<dbReference type="EMDB" id="EMD-16594"/>
<dbReference type="EMDB" id="EMD-16609"/>
<dbReference type="EMDB" id="EMD-16616"/>
<dbReference type="EMDB" id="EMD-16634"/>
<dbReference type="EMDB" id="EMD-16648"/>
<dbReference type="EMDB" id="EMD-16684"/>
<dbReference type="EMDB" id="EMD-16702"/>
<dbReference type="EMDB" id="EMD-16729"/>
<dbReference type="EMDB" id="EMD-17549"/>
<dbReference type="EMDB" id="EMD-17550"/>
<dbReference type="EMDB" id="EMD-17552"/>
<dbReference type="EMDB" id="EMD-17653"/>
<dbReference type="EMDB" id="EMD-20077"/>
<dbReference type="EMDB" id="EMD-21859"/>
<dbReference type="EMDB" id="EMD-22196"/>
<dbReference type="EMDB" id="EMD-22198"/>
<dbReference type="EMDB" id="EMD-23934"/>
<dbReference type="EMDB" id="EMD-23935"/>
<dbReference type="EMDB" id="EMD-24235"/>
<dbReference type="EMDB" id="EMD-24269"/>
<dbReference type="EMDB" id="EMD-24270"/>
<dbReference type="EMDB" id="EMD-24271"/>
<dbReference type="EMDB" id="EMD-24296"/>
<dbReference type="EMDB" id="EMD-26033"/>
<dbReference type="EMDB" id="EMD-26034"/>
<dbReference type="EMDB" id="EMD-26259"/>
<dbReference type="EMDB" id="EMD-26485"/>
<dbReference type="EMDB" id="EMD-26651"/>
<dbReference type="EMDB" id="EMD-26686"/>
<dbReference type="EMDB" id="EMD-26703"/>
<dbReference type="EMDB" id="EMD-26941"/>
<dbReference type="EMDB" id="EMD-28610"/>
<dbReference type="EMDB" id="EMD-28632"/>
<dbReference type="EMDB" id="EMD-28633"/>
<dbReference type="EMDB" id="EMD-28634"/>
<dbReference type="EMDB" id="EMD-28635"/>
<dbReference type="EMDB" id="EMD-28636"/>
<dbReference type="EMDB" id="EMD-28642"/>
<dbReference type="EMDB" id="EMD-28643"/>
<dbReference type="EMDB" id="EMD-30108"/>
<dbReference type="EMDB" id="EMD-30170"/>
<dbReference type="EMDB" id="EMD-30174"/>
<dbReference type="EMDB" id="EMD-3461"/>
<dbReference type="EMDB" id="EMD-34725"/>
<dbReference type="EMDB" id="EMD-36839"/>
<dbReference type="EMDB" id="EMD-36945"/>
<dbReference type="EMDB" id="EMD-38660"/>
<dbReference type="EMDB" id="EMD-40990"/>
<dbReference type="EMDB" id="EMD-40991"/>
<dbReference type="EMDB" id="EMD-40992"/>
<dbReference type="EMDB" id="EMD-40993"/>
<dbReference type="EMDB" id="EMD-40997"/>
<dbReference type="EMDB" id="EMD-40998"/>
<dbReference type="EMDB" id="EMD-40999"/>
<dbReference type="EMDB" id="EMD-41000"/>
<dbReference type="EMDB" id="EMD-41001"/>
<dbReference type="EMDB" id="EMD-41002"/>
<dbReference type="EMDB" id="EMD-4140"/>
<dbReference type="EMDB" id="EMD-42525"/>
<dbReference type="EMDB" id="EMD-42540"/>
<dbReference type="EMDB" id="EMD-43017"/>
<dbReference type="EMDB" id="EMD-4302"/>
<dbReference type="EMDB" id="EMD-43021"/>
<dbReference type="EMDB" id="EMD-43027"/>
<dbReference type="EMDB" id="EMD-4427"/>
<dbReference type="EMDB" id="EMD-4474"/>
<dbReference type="EMDB" id="EMD-4560"/>
<dbReference type="EMDB" id="EMD-4630"/>
<dbReference type="EMDB" id="EMD-4636"/>
<dbReference type="EMDB" id="EMD-4751"/>
<dbReference type="EMDB" id="EMD-4752"/>
<dbReference type="EMDB" id="EMD-4753"/>
<dbReference type="EMDB" id="EMD-4884"/>
<dbReference type="EMDB" id="EMD-50259"/>
<dbReference type="EMDB" id="EMD-7324"/>
<dbReference type="EMDB" id="EMD-8362"/>
<dbReference type="EMDB" id="EMD-8368"/>
<dbReference type="SMR" id="P0CX41"/>
<dbReference type="BioGRID" id="32617">
    <property type="interactions" value="279"/>
</dbReference>
<dbReference type="BioGRID" id="36862">
    <property type="interactions" value="177"/>
</dbReference>
<dbReference type="ComplexPortal" id="CPX-1601">
    <property type="entry name" value="60S cytosolic large ribosomal subunit"/>
</dbReference>
<dbReference type="FunCoup" id="P0CX41">
    <property type="interactions" value="1244"/>
</dbReference>
<dbReference type="IntAct" id="P0CX41">
    <property type="interactions" value="9"/>
</dbReference>
<dbReference type="MINT" id="P0CX41"/>
<dbReference type="STRING" id="4932.YBL087C"/>
<dbReference type="iPTMnet" id="P0CX41"/>
<dbReference type="PaxDb" id="4932-YBL087C"/>
<dbReference type="PeptideAtlas" id="P0CX41"/>
<dbReference type="TopDownProteomics" id="P0CX41"/>
<dbReference type="EnsemblFungi" id="YBL087C_mRNA">
    <property type="protein sequence ID" value="YBL087C"/>
    <property type="gene ID" value="YBL087C"/>
</dbReference>
<dbReference type="EnsemblFungi" id="YER117W_mRNA">
    <property type="protein sequence ID" value="YER117W"/>
    <property type="gene ID" value="YER117W"/>
</dbReference>
<dbReference type="GeneID" id="852191"/>
<dbReference type="KEGG" id="sce:YBL087C"/>
<dbReference type="KEGG" id="sce:YER117W"/>
<dbReference type="AGR" id="SGD:S000000183"/>
<dbReference type="SGD" id="S000000183">
    <property type="gene designation" value="RPL23A"/>
</dbReference>
<dbReference type="VEuPathDB" id="FungiDB:YBL087C"/>
<dbReference type="VEuPathDB" id="FungiDB:YER117W"/>
<dbReference type="eggNOG" id="KOG0901">
    <property type="taxonomic scope" value="Eukaryota"/>
</dbReference>
<dbReference type="HOGENOM" id="CLU_095071_3_0_1"/>
<dbReference type="InParanoid" id="P0CX41"/>
<dbReference type="OMA" id="IRQSKPW"/>
<dbReference type="OrthoDB" id="407959at2759"/>
<dbReference type="BioCyc" id="YEAST:G3O-28976-MONOMER"/>
<dbReference type="Reactome" id="R-SCE-156827">
    <property type="pathway name" value="L13a-mediated translational silencing of Ceruloplasmin expression"/>
</dbReference>
<dbReference type="Reactome" id="R-SCE-1799339">
    <property type="pathway name" value="SRP-dependent cotranslational protein targeting to membrane"/>
</dbReference>
<dbReference type="Reactome" id="R-SCE-72689">
    <property type="pathway name" value="Formation of a pool of free 40S subunits"/>
</dbReference>
<dbReference type="Reactome" id="R-SCE-72706">
    <property type="pathway name" value="GTP hydrolysis and joining of the 60S ribosomal subunit"/>
</dbReference>
<dbReference type="Reactome" id="R-SCE-975956">
    <property type="pathway name" value="Nonsense Mediated Decay (NMD) independent of the Exon Junction Complex (EJC)"/>
</dbReference>
<dbReference type="Reactome" id="R-SCE-975957">
    <property type="pathway name" value="Nonsense Mediated Decay (NMD) enhanced by the Exon Junction Complex (EJC)"/>
</dbReference>
<dbReference type="BioGRID-ORCS" id="852191">
    <property type="hits" value="3 hits in 10 CRISPR screens"/>
</dbReference>
<dbReference type="BioGRID-ORCS" id="856853">
    <property type="hits" value="5 hits in 10 CRISPR screens"/>
</dbReference>
<dbReference type="EvolutionaryTrace" id="P0CX41"/>
<dbReference type="PRO" id="PR:P0CX41"/>
<dbReference type="Proteomes" id="UP000002311">
    <property type="component" value="Chromosome II"/>
</dbReference>
<dbReference type="RNAct" id="P0CX41">
    <property type="molecule type" value="protein"/>
</dbReference>
<dbReference type="ExpressionAtlas" id="P0CX41">
    <property type="expression patterns" value="baseline and differential"/>
</dbReference>
<dbReference type="GO" id="GO:0005829">
    <property type="term" value="C:cytosol"/>
    <property type="evidence" value="ECO:0000304"/>
    <property type="project" value="Reactome"/>
</dbReference>
<dbReference type="GO" id="GO:0022625">
    <property type="term" value="C:cytosolic large ribosomal subunit"/>
    <property type="evidence" value="ECO:0000314"/>
    <property type="project" value="SGD"/>
</dbReference>
<dbReference type="GO" id="GO:0070180">
    <property type="term" value="F:large ribosomal subunit rRNA binding"/>
    <property type="evidence" value="ECO:0000318"/>
    <property type="project" value="GO_Central"/>
</dbReference>
<dbReference type="GO" id="GO:0003735">
    <property type="term" value="F:structural constituent of ribosome"/>
    <property type="evidence" value="ECO:0000318"/>
    <property type="project" value="GO_Central"/>
</dbReference>
<dbReference type="GO" id="GO:0002181">
    <property type="term" value="P:cytoplasmic translation"/>
    <property type="evidence" value="ECO:0000305"/>
    <property type="project" value="SGD"/>
</dbReference>
<dbReference type="CDD" id="cd00337">
    <property type="entry name" value="Ribosomal_uL14"/>
    <property type="match status" value="1"/>
</dbReference>
<dbReference type="FunFam" id="2.40.150.20:FF:000003">
    <property type="entry name" value="60S ribosomal protein L23"/>
    <property type="match status" value="1"/>
</dbReference>
<dbReference type="Gene3D" id="2.40.150.20">
    <property type="entry name" value="Ribosomal protein L14"/>
    <property type="match status" value="1"/>
</dbReference>
<dbReference type="HAMAP" id="MF_01367">
    <property type="entry name" value="Ribosomal_uL14"/>
    <property type="match status" value="1"/>
</dbReference>
<dbReference type="InterPro" id="IPR000218">
    <property type="entry name" value="Ribosomal_uL14"/>
</dbReference>
<dbReference type="InterPro" id="IPR019972">
    <property type="entry name" value="Ribosomal_uL14_CS"/>
</dbReference>
<dbReference type="InterPro" id="IPR036853">
    <property type="entry name" value="Ribosomal_uL14_sf"/>
</dbReference>
<dbReference type="PANTHER" id="PTHR11761">
    <property type="entry name" value="50S/60S RIBOSOMAL PROTEIN L14/L23"/>
    <property type="match status" value="1"/>
</dbReference>
<dbReference type="PANTHER" id="PTHR11761:SF8">
    <property type="entry name" value="LARGE RIBOSOMAL SUBUNIT PROTEIN UL14"/>
    <property type="match status" value="1"/>
</dbReference>
<dbReference type="Pfam" id="PF00238">
    <property type="entry name" value="Ribosomal_L14"/>
    <property type="match status" value="1"/>
</dbReference>
<dbReference type="SMART" id="SM01374">
    <property type="entry name" value="Ribosomal_L14"/>
    <property type="match status" value="1"/>
</dbReference>
<dbReference type="SUPFAM" id="SSF50193">
    <property type="entry name" value="Ribosomal protein L14"/>
    <property type="match status" value="1"/>
</dbReference>
<dbReference type="PROSITE" id="PS00049">
    <property type="entry name" value="RIBOSOMAL_L14"/>
    <property type="match status" value="1"/>
</dbReference>
<comment type="function">
    <text evidence="8">Component of the ribosome, a large ribonucleoprotein complex responsible for the synthesis of proteins in the cell. The small ribosomal subunit (SSU) binds messenger RNAs (mRNAs) and translates the encoded message by selecting cognate aminoacyl-transfer RNA (tRNA) molecules. The large subunit (LSU) contains the ribosomal catalytic site termed the peptidyl transferase center (PTC), which catalyzes the formation of peptide bonds, thereby polymerizing the amino acids delivered by tRNAs into a polypeptide chain. The nascent polypeptides leave the ribosome through a tunnel in the LSU and interact with protein factors that function in enzymatic processing, targeting, and the membrane insertion of nascent chains at the exit of the ribosomal tunnel.</text>
</comment>
<comment type="subunit">
    <text evidence="4 9">Component of the large ribosomal subunit (LSU). Mature yeast ribosomes consist of a small (40S) and a large (60S) subunit. The 40S small subunit contains 1 molecule of ribosomal RNA (18S rRNA) and 33 different proteins (encoded by 57 genes). The large 60S subunit contains 3 rRNA molecules (25S, 5.8S and 5S rRNA) and 46 different proteins (encoded by 81 genes) (PubMed:22096102, PubMed:9559554).</text>
</comment>
<comment type="subcellular location">
    <subcellularLocation>
        <location evidence="4">Cytoplasm</location>
    </subcellularLocation>
</comment>
<comment type="PTM">
    <text evidence="2">Methylated by RKM1 at 2 different sites, but it is unclear which are the 2 methylated residues among Lys-40, Lys-106 and/or Lys-110.</text>
</comment>
<comment type="mass spectrometry">
    <text>Monoisotopic mass with either 7 methylation modifications or 1 acetylation and 4 methylation modifications.</text>
</comment>
<comment type="miscellaneous">
    <text evidence="7">There are 2 genes for uL14 in yeast.</text>
</comment>
<comment type="similarity">
    <text evidence="7">Belongs to the universal ribosomal protein uL14 family.</text>
</comment>
<gene>
    <name evidence="6" type="primary">RPL23A</name>
    <name type="synonym">RPL17A</name>
    <name type="synonym">RPL17AA</name>
    <name type="ordered locus">YBL087C</name>
    <name type="ORF">YBL0713</name>
</gene>